<evidence type="ECO:0000255" key="1">
    <source>
        <dbReference type="HAMAP-Rule" id="MF_00140"/>
    </source>
</evidence>
<feature type="chain" id="PRO_0000274850" description="Tryptophan--tRNA ligase">
    <location>
        <begin position="1"/>
        <end position="328"/>
    </location>
</feature>
<feature type="short sequence motif" description="'HIGH' region" evidence="1">
    <location>
        <begin position="11"/>
        <end position="19"/>
    </location>
</feature>
<feature type="short sequence motif" description="'KMSKS' region" evidence="1">
    <location>
        <begin position="195"/>
        <end position="199"/>
    </location>
</feature>
<feature type="binding site" evidence="1">
    <location>
        <begin position="10"/>
        <end position="12"/>
    </location>
    <ligand>
        <name>ATP</name>
        <dbReference type="ChEBI" id="CHEBI:30616"/>
    </ligand>
</feature>
<feature type="binding site" evidence="1">
    <location>
        <begin position="18"/>
        <end position="19"/>
    </location>
    <ligand>
        <name>ATP</name>
        <dbReference type="ChEBI" id="CHEBI:30616"/>
    </ligand>
</feature>
<feature type="binding site" evidence="1">
    <location>
        <position position="134"/>
    </location>
    <ligand>
        <name>L-tryptophan</name>
        <dbReference type="ChEBI" id="CHEBI:57912"/>
    </ligand>
</feature>
<feature type="binding site" evidence="1">
    <location>
        <begin position="146"/>
        <end position="148"/>
    </location>
    <ligand>
        <name>ATP</name>
        <dbReference type="ChEBI" id="CHEBI:30616"/>
    </ligand>
</feature>
<feature type="binding site" evidence="1">
    <location>
        <position position="186"/>
    </location>
    <ligand>
        <name>ATP</name>
        <dbReference type="ChEBI" id="CHEBI:30616"/>
    </ligand>
</feature>
<feature type="binding site" evidence="1">
    <location>
        <begin position="195"/>
        <end position="199"/>
    </location>
    <ligand>
        <name>ATP</name>
        <dbReference type="ChEBI" id="CHEBI:30616"/>
    </ligand>
</feature>
<protein>
    <recommendedName>
        <fullName evidence="1">Tryptophan--tRNA ligase</fullName>
        <ecNumber evidence="1">6.1.1.2</ecNumber>
    </recommendedName>
    <alternativeName>
        <fullName evidence="1">Tryptophanyl-tRNA synthetase</fullName>
        <shortName evidence="1">TrpRS</shortName>
    </alternativeName>
</protein>
<organism>
    <name type="scientific">Rickettsia bellii (strain RML369-C)</name>
    <dbReference type="NCBI Taxonomy" id="336407"/>
    <lineage>
        <taxon>Bacteria</taxon>
        <taxon>Pseudomonadati</taxon>
        <taxon>Pseudomonadota</taxon>
        <taxon>Alphaproteobacteria</taxon>
        <taxon>Rickettsiales</taxon>
        <taxon>Rickettsiaceae</taxon>
        <taxon>Rickettsieae</taxon>
        <taxon>Rickettsia</taxon>
        <taxon>belli group</taxon>
    </lineage>
</organism>
<keyword id="KW-0030">Aminoacyl-tRNA synthetase</keyword>
<keyword id="KW-0067">ATP-binding</keyword>
<keyword id="KW-0963">Cytoplasm</keyword>
<keyword id="KW-0436">Ligase</keyword>
<keyword id="KW-0547">Nucleotide-binding</keyword>
<keyword id="KW-0648">Protein biosynthesis</keyword>
<name>SYW_RICBR</name>
<proteinExistence type="inferred from homology"/>
<sequence>MKKTVLSGVQATGSLHLGNYLGSIRNWVKMQEEYNCFFFLADLHSITVDIAPSELKRSVIETLAIYLAAGLDPNKVTIFAQSMVKEHAELAWLLNCVTPLGWLKRMTQFKDKAGKDQEKACLGLFSYPVLMAADILIYKADIVPVGEDQKQHLELTRDIAGVINRKFNKEILKVPEVLIGGSGTRIMSLRDGSKKMSKSDSSDFSRINLRDDNDLIHQKIKKAKTDHLSFVSYDKEARPEISNLLDIYTTLSEEKLENIIQNYEGFAKFKEDLAEIIITNLQPMRDKYLELMNDQEYLLKILHQGAEKARVRASETVNELKEQFGFVI</sequence>
<gene>
    <name evidence="1" type="primary">trpS</name>
    <name type="ordered locus">RBE_0790</name>
</gene>
<reference key="1">
    <citation type="journal article" date="2006" name="PLoS Genet.">
        <title>Genome sequence of Rickettsia bellii illuminates the role of amoebae in gene exchanges between intracellular pathogens.</title>
        <authorList>
            <person name="Ogata H."/>
            <person name="La Scola B."/>
            <person name="Audic S."/>
            <person name="Renesto P."/>
            <person name="Blanc G."/>
            <person name="Robert C."/>
            <person name="Fournier P.-E."/>
            <person name="Claverie J.-M."/>
            <person name="Raoult D."/>
        </authorList>
    </citation>
    <scope>NUCLEOTIDE SEQUENCE [LARGE SCALE GENOMIC DNA]</scope>
    <source>
        <strain>RML369-C</strain>
    </source>
</reference>
<dbReference type="EC" id="6.1.1.2" evidence="1"/>
<dbReference type="EMBL" id="CP000087">
    <property type="protein sequence ID" value="ABE04871.1"/>
    <property type="molecule type" value="Genomic_DNA"/>
</dbReference>
<dbReference type="RefSeq" id="WP_011477458.1">
    <property type="nucleotide sequence ID" value="NC_007940.1"/>
</dbReference>
<dbReference type="SMR" id="Q1RIE3"/>
<dbReference type="KEGG" id="rbe:RBE_0790"/>
<dbReference type="eggNOG" id="COG0180">
    <property type="taxonomic scope" value="Bacteria"/>
</dbReference>
<dbReference type="HOGENOM" id="CLU_029244_1_4_5"/>
<dbReference type="OrthoDB" id="9801042at2"/>
<dbReference type="Proteomes" id="UP000001951">
    <property type="component" value="Chromosome"/>
</dbReference>
<dbReference type="GO" id="GO:0005737">
    <property type="term" value="C:cytoplasm"/>
    <property type="evidence" value="ECO:0007669"/>
    <property type="project" value="UniProtKB-SubCell"/>
</dbReference>
<dbReference type="GO" id="GO:0005524">
    <property type="term" value="F:ATP binding"/>
    <property type="evidence" value="ECO:0007669"/>
    <property type="project" value="UniProtKB-UniRule"/>
</dbReference>
<dbReference type="GO" id="GO:0004830">
    <property type="term" value="F:tryptophan-tRNA ligase activity"/>
    <property type="evidence" value="ECO:0007669"/>
    <property type="project" value="UniProtKB-UniRule"/>
</dbReference>
<dbReference type="GO" id="GO:0006436">
    <property type="term" value="P:tryptophanyl-tRNA aminoacylation"/>
    <property type="evidence" value="ECO:0007669"/>
    <property type="project" value="UniProtKB-UniRule"/>
</dbReference>
<dbReference type="CDD" id="cd00806">
    <property type="entry name" value="TrpRS_core"/>
    <property type="match status" value="1"/>
</dbReference>
<dbReference type="FunFam" id="1.10.240.10:FF:000002">
    <property type="entry name" value="Tryptophan--tRNA ligase"/>
    <property type="match status" value="1"/>
</dbReference>
<dbReference type="Gene3D" id="3.40.50.620">
    <property type="entry name" value="HUPs"/>
    <property type="match status" value="1"/>
</dbReference>
<dbReference type="Gene3D" id="1.10.240.10">
    <property type="entry name" value="Tyrosyl-Transfer RNA Synthetase"/>
    <property type="match status" value="1"/>
</dbReference>
<dbReference type="HAMAP" id="MF_00140_B">
    <property type="entry name" value="Trp_tRNA_synth_B"/>
    <property type="match status" value="1"/>
</dbReference>
<dbReference type="InterPro" id="IPR002305">
    <property type="entry name" value="aa-tRNA-synth_Ic"/>
</dbReference>
<dbReference type="InterPro" id="IPR014729">
    <property type="entry name" value="Rossmann-like_a/b/a_fold"/>
</dbReference>
<dbReference type="InterPro" id="IPR002306">
    <property type="entry name" value="Trp-tRNA-ligase"/>
</dbReference>
<dbReference type="InterPro" id="IPR024109">
    <property type="entry name" value="Trp-tRNA-ligase_bac-type"/>
</dbReference>
<dbReference type="InterPro" id="IPR050203">
    <property type="entry name" value="Trp-tRNA_synthetase"/>
</dbReference>
<dbReference type="NCBIfam" id="TIGR00233">
    <property type="entry name" value="trpS"/>
    <property type="match status" value="1"/>
</dbReference>
<dbReference type="PANTHER" id="PTHR43766">
    <property type="entry name" value="TRYPTOPHAN--TRNA LIGASE, MITOCHONDRIAL"/>
    <property type="match status" value="1"/>
</dbReference>
<dbReference type="PANTHER" id="PTHR43766:SF1">
    <property type="entry name" value="TRYPTOPHAN--TRNA LIGASE, MITOCHONDRIAL"/>
    <property type="match status" value="1"/>
</dbReference>
<dbReference type="Pfam" id="PF00579">
    <property type="entry name" value="tRNA-synt_1b"/>
    <property type="match status" value="1"/>
</dbReference>
<dbReference type="PRINTS" id="PR01039">
    <property type="entry name" value="TRNASYNTHTRP"/>
</dbReference>
<dbReference type="SUPFAM" id="SSF52374">
    <property type="entry name" value="Nucleotidylyl transferase"/>
    <property type="match status" value="1"/>
</dbReference>
<comment type="function">
    <text evidence="1">Catalyzes the attachment of tryptophan to tRNA(Trp).</text>
</comment>
<comment type="catalytic activity">
    <reaction evidence="1">
        <text>tRNA(Trp) + L-tryptophan + ATP = L-tryptophyl-tRNA(Trp) + AMP + diphosphate + H(+)</text>
        <dbReference type="Rhea" id="RHEA:24080"/>
        <dbReference type="Rhea" id="RHEA-COMP:9671"/>
        <dbReference type="Rhea" id="RHEA-COMP:9705"/>
        <dbReference type="ChEBI" id="CHEBI:15378"/>
        <dbReference type="ChEBI" id="CHEBI:30616"/>
        <dbReference type="ChEBI" id="CHEBI:33019"/>
        <dbReference type="ChEBI" id="CHEBI:57912"/>
        <dbReference type="ChEBI" id="CHEBI:78442"/>
        <dbReference type="ChEBI" id="CHEBI:78535"/>
        <dbReference type="ChEBI" id="CHEBI:456215"/>
        <dbReference type="EC" id="6.1.1.2"/>
    </reaction>
</comment>
<comment type="subunit">
    <text evidence="1">Homodimer.</text>
</comment>
<comment type="subcellular location">
    <subcellularLocation>
        <location evidence="1">Cytoplasm</location>
    </subcellularLocation>
</comment>
<comment type="similarity">
    <text evidence="1">Belongs to the class-I aminoacyl-tRNA synthetase family.</text>
</comment>
<accession>Q1RIE3</accession>